<comment type="function">
    <text evidence="1">Possible role in transport between endoplasmic reticulum and Golgi.</text>
</comment>
<comment type="subunit">
    <text evidence="4 5">May form a heteromeric complex composed of ERGIC1, ERGIC2 and ERGIC3 (PubMed:31142615). Interacts with ERGIC3, the interaction is required for the stable expression of both proteins (PubMed:31142615). May interact with EEF1A1 (PubMed:17980171).</text>
</comment>
<comment type="interaction">
    <interactant intactId="EBI-4403663">
        <id>Q96RQ1</id>
    </interactant>
    <interactant intactId="EBI-781551">
        <id>Q9Y282</id>
        <label>ERGIC3</label>
    </interactant>
    <organismsDiffer>false</organismsDiffer>
    <experiments>3</experiments>
</comment>
<comment type="interaction">
    <interactant intactId="EBI-4403663">
        <id>Q96RQ1</id>
    </interactant>
    <interactant intactId="EBI-11724790">
        <id>P37059</id>
        <label>HSD17B2</label>
    </interactant>
    <organismsDiffer>false</organismsDiffer>
    <experiments>3</experiments>
</comment>
<comment type="subcellular location">
    <subcellularLocation>
        <location>Endoplasmic reticulum-Golgi intermediate compartment membrane</location>
        <topology>Multi-pass membrane protein</topology>
    </subcellularLocation>
    <subcellularLocation>
        <location>Golgi apparatus</location>
        <location>cis-Golgi network membrane</location>
        <topology>Multi-pass membrane protein</topology>
    </subcellularLocation>
    <subcellularLocation>
        <location>Endoplasmic reticulum membrane</location>
        <topology>Multi-pass membrane protein</topology>
    </subcellularLocation>
    <subcellularLocation>
        <location>Cytoplasm</location>
    </subcellularLocation>
    <subcellularLocation>
        <location>Nucleus</location>
    </subcellularLocation>
    <text evidence="3 4">Cycles between the endoplasmic reticulum and the Golgi. According to a report, localizes to the nucleus (PubMed:11445006). Another report shows a partial localization in the nucleus (PubMed:17980171).</text>
</comment>
<comment type="tissue specificity">
    <text evidence="3">Ubiquitously expressed.</text>
</comment>
<comment type="similarity">
    <text evidence="6">Belongs to the ERGIC family.</text>
</comment>
<comment type="sequence caution" evidence="6">
    <conflict type="frameshift">
        <sequence resource="EMBL-CDS" id="AAF61208"/>
    </conflict>
</comment>
<keyword id="KW-0963">Cytoplasm</keyword>
<keyword id="KW-0256">Endoplasmic reticulum</keyword>
<keyword id="KW-0931">ER-Golgi transport</keyword>
<keyword id="KW-0333">Golgi apparatus</keyword>
<keyword id="KW-0472">Membrane</keyword>
<keyword id="KW-0539">Nucleus</keyword>
<keyword id="KW-1267">Proteomics identification</keyword>
<keyword id="KW-1185">Reference proteome</keyword>
<keyword id="KW-0812">Transmembrane</keyword>
<keyword id="KW-1133">Transmembrane helix</keyword>
<keyword id="KW-0813">Transport</keyword>
<name>ERGI2_HUMAN</name>
<gene>
    <name type="primary">ERGIC2</name>
    <name type="synonym">ERV41</name>
    <name type="synonym">PTX1</name>
    <name type="ORF">CDA14</name>
</gene>
<evidence type="ECO:0000250" key="1"/>
<evidence type="ECO:0000255" key="2"/>
<evidence type="ECO:0000269" key="3">
    <source>
    </source>
</evidence>
<evidence type="ECO:0000269" key="4">
    <source>
    </source>
</evidence>
<evidence type="ECO:0000269" key="5">
    <source>
    </source>
</evidence>
<evidence type="ECO:0000305" key="6"/>
<reference key="1">
    <citation type="journal article" date="2001" name="DNA Cell Biol.">
        <title>Molecular cloning, expression, localization, and gene organization of PTX1, a human nuclear protein that is downregulated in prostate cancer.</title>
        <authorList>
            <person name="Kwok S.C.M."/>
            <person name="Liu X."/>
            <person name="Daskal I."/>
        </authorList>
    </citation>
    <scope>NUCLEOTIDE SEQUENCE [MRNA]</scope>
    <scope>TISSUE SPECIFICITY</scope>
    <scope>SUBCELLULAR LOCATION</scope>
    <source>
        <tissue>Prostate</tissue>
    </source>
</reference>
<reference key="2">
    <citation type="journal article" date="2004" name="Nat. Genet.">
        <title>Complete sequencing and characterization of 21,243 full-length human cDNAs.</title>
        <authorList>
            <person name="Ota T."/>
            <person name="Suzuki Y."/>
            <person name="Nishikawa T."/>
            <person name="Otsuki T."/>
            <person name="Sugiyama T."/>
            <person name="Irie R."/>
            <person name="Wakamatsu A."/>
            <person name="Hayashi K."/>
            <person name="Sato H."/>
            <person name="Nagai K."/>
            <person name="Kimura K."/>
            <person name="Makita H."/>
            <person name="Sekine M."/>
            <person name="Obayashi M."/>
            <person name="Nishi T."/>
            <person name="Shibahara T."/>
            <person name="Tanaka T."/>
            <person name="Ishii S."/>
            <person name="Yamamoto J."/>
            <person name="Saito K."/>
            <person name="Kawai Y."/>
            <person name="Isono Y."/>
            <person name="Nakamura Y."/>
            <person name="Nagahari K."/>
            <person name="Murakami K."/>
            <person name="Yasuda T."/>
            <person name="Iwayanagi T."/>
            <person name="Wagatsuma M."/>
            <person name="Shiratori A."/>
            <person name="Sudo H."/>
            <person name="Hosoiri T."/>
            <person name="Kaku Y."/>
            <person name="Kodaira H."/>
            <person name="Kondo H."/>
            <person name="Sugawara M."/>
            <person name="Takahashi M."/>
            <person name="Kanda K."/>
            <person name="Yokoi T."/>
            <person name="Furuya T."/>
            <person name="Kikkawa E."/>
            <person name="Omura Y."/>
            <person name="Abe K."/>
            <person name="Kamihara K."/>
            <person name="Katsuta N."/>
            <person name="Sato K."/>
            <person name="Tanikawa M."/>
            <person name="Yamazaki M."/>
            <person name="Ninomiya K."/>
            <person name="Ishibashi T."/>
            <person name="Yamashita H."/>
            <person name="Murakawa K."/>
            <person name="Fujimori K."/>
            <person name="Tanai H."/>
            <person name="Kimata M."/>
            <person name="Watanabe M."/>
            <person name="Hiraoka S."/>
            <person name="Chiba Y."/>
            <person name="Ishida S."/>
            <person name="Ono Y."/>
            <person name="Takiguchi S."/>
            <person name="Watanabe S."/>
            <person name="Yosida M."/>
            <person name="Hotuta T."/>
            <person name="Kusano J."/>
            <person name="Kanehori K."/>
            <person name="Takahashi-Fujii A."/>
            <person name="Hara H."/>
            <person name="Tanase T.-O."/>
            <person name="Nomura Y."/>
            <person name="Togiya S."/>
            <person name="Komai F."/>
            <person name="Hara R."/>
            <person name="Takeuchi K."/>
            <person name="Arita M."/>
            <person name="Imose N."/>
            <person name="Musashino K."/>
            <person name="Yuuki H."/>
            <person name="Oshima A."/>
            <person name="Sasaki N."/>
            <person name="Aotsuka S."/>
            <person name="Yoshikawa Y."/>
            <person name="Matsunawa H."/>
            <person name="Ichihara T."/>
            <person name="Shiohata N."/>
            <person name="Sano S."/>
            <person name="Moriya S."/>
            <person name="Momiyama H."/>
            <person name="Satoh N."/>
            <person name="Takami S."/>
            <person name="Terashima Y."/>
            <person name="Suzuki O."/>
            <person name="Nakagawa S."/>
            <person name="Senoh A."/>
            <person name="Mizoguchi H."/>
            <person name="Goto Y."/>
            <person name="Shimizu F."/>
            <person name="Wakebe H."/>
            <person name="Hishigaki H."/>
            <person name="Watanabe T."/>
            <person name="Sugiyama A."/>
            <person name="Takemoto M."/>
            <person name="Kawakami B."/>
            <person name="Yamazaki M."/>
            <person name="Watanabe K."/>
            <person name="Kumagai A."/>
            <person name="Itakura S."/>
            <person name="Fukuzumi Y."/>
            <person name="Fujimori Y."/>
            <person name="Komiyama M."/>
            <person name="Tashiro H."/>
            <person name="Tanigami A."/>
            <person name="Fujiwara T."/>
            <person name="Ono T."/>
            <person name="Yamada K."/>
            <person name="Fujii Y."/>
            <person name="Ozaki K."/>
            <person name="Hirao M."/>
            <person name="Ohmori Y."/>
            <person name="Kawabata A."/>
            <person name="Hikiji T."/>
            <person name="Kobatake N."/>
            <person name="Inagaki H."/>
            <person name="Ikema Y."/>
            <person name="Okamoto S."/>
            <person name="Okitani R."/>
            <person name="Kawakami T."/>
            <person name="Noguchi S."/>
            <person name="Itoh T."/>
            <person name="Shigeta K."/>
            <person name="Senba T."/>
            <person name="Matsumura K."/>
            <person name="Nakajima Y."/>
            <person name="Mizuno T."/>
            <person name="Morinaga M."/>
            <person name="Sasaki M."/>
            <person name="Togashi T."/>
            <person name="Oyama M."/>
            <person name="Hata H."/>
            <person name="Watanabe M."/>
            <person name="Komatsu T."/>
            <person name="Mizushima-Sugano J."/>
            <person name="Satoh T."/>
            <person name="Shirai Y."/>
            <person name="Takahashi Y."/>
            <person name="Nakagawa K."/>
            <person name="Okumura K."/>
            <person name="Nagase T."/>
            <person name="Nomura N."/>
            <person name="Kikuchi H."/>
            <person name="Masuho Y."/>
            <person name="Yamashita R."/>
            <person name="Nakai K."/>
            <person name="Yada T."/>
            <person name="Nakamura Y."/>
            <person name="Ohara O."/>
            <person name="Isogai T."/>
            <person name="Sugano S."/>
        </authorList>
    </citation>
    <scope>NUCLEOTIDE SEQUENCE [LARGE SCALE MRNA]</scope>
    <source>
        <tissue>Embryo</tissue>
    </source>
</reference>
<reference key="3">
    <citation type="submission" date="1999-12" db="EMBL/GenBank/DDBJ databases">
        <title>A novel gene expressed in human pheochromocytoma.</title>
        <authorList>
            <person name="Song H."/>
            <person name="Gao G."/>
            <person name="Peng Y."/>
            <person name="Ren S."/>
            <person name="Chen Z."/>
            <person name="Han Z."/>
        </authorList>
    </citation>
    <scope>NUCLEOTIDE SEQUENCE [LARGE SCALE MRNA]</scope>
    <source>
        <tissue>Pheochromocytoma</tissue>
    </source>
</reference>
<reference key="4">
    <citation type="submission" date="2005-04" db="EMBL/GenBank/DDBJ databases">
        <authorList>
            <person name="Suzuki Y."/>
            <person name="Sugano S."/>
            <person name="Totoki Y."/>
            <person name="Toyoda A."/>
            <person name="Takeda T."/>
            <person name="Sakaki Y."/>
            <person name="Tanaka A."/>
            <person name="Yokoyama S."/>
        </authorList>
    </citation>
    <scope>NUCLEOTIDE SEQUENCE [LARGE SCALE MRNA]</scope>
    <source>
        <tissue>Liver</tissue>
    </source>
</reference>
<reference key="5">
    <citation type="journal article" date="2006" name="Nature">
        <title>The finished DNA sequence of human chromosome 12.</title>
        <authorList>
            <person name="Scherer S.E."/>
            <person name="Muzny D.M."/>
            <person name="Buhay C.J."/>
            <person name="Chen R."/>
            <person name="Cree A."/>
            <person name="Ding Y."/>
            <person name="Dugan-Rocha S."/>
            <person name="Gill R."/>
            <person name="Gunaratne P."/>
            <person name="Harris R.A."/>
            <person name="Hawes A.C."/>
            <person name="Hernandez J."/>
            <person name="Hodgson A.V."/>
            <person name="Hume J."/>
            <person name="Jackson A."/>
            <person name="Khan Z.M."/>
            <person name="Kovar-Smith C."/>
            <person name="Lewis L.R."/>
            <person name="Lozado R.J."/>
            <person name="Metzker M.L."/>
            <person name="Milosavljevic A."/>
            <person name="Miner G.R."/>
            <person name="Montgomery K.T."/>
            <person name="Morgan M.B."/>
            <person name="Nazareth L.V."/>
            <person name="Scott G."/>
            <person name="Sodergren E."/>
            <person name="Song X.-Z."/>
            <person name="Steffen D."/>
            <person name="Lovering R.C."/>
            <person name="Wheeler D.A."/>
            <person name="Worley K.C."/>
            <person name="Yuan Y."/>
            <person name="Zhang Z."/>
            <person name="Adams C.Q."/>
            <person name="Ansari-Lari M.A."/>
            <person name="Ayele M."/>
            <person name="Brown M.J."/>
            <person name="Chen G."/>
            <person name="Chen Z."/>
            <person name="Clerc-Blankenburg K.P."/>
            <person name="Davis C."/>
            <person name="Delgado O."/>
            <person name="Dinh H.H."/>
            <person name="Draper H."/>
            <person name="Gonzalez-Garay M.L."/>
            <person name="Havlak P."/>
            <person name="Jackson L.R."/>
            <person name="Jacob L.S."/>
            <person name="Kelly S.H."/>
            <person name="Li L."/>
            <person name="Li Z."/>
            <person name="Liu J."/>
            <person name="Liu W."/>
            <person name="Lu J."/>
            <person name="Maheshwari M."/>
            <person name="Nguyen B.-V."/>
            <person name="Okwuonu G.O."/>
            <person name="Pasternak S."/>
            <person name="Perez L.M."/>
            <person name="Plopper F.J.H."/>
            <person name="Santibanez J."/>
            <person name="Shen H."/>
            <person name="Tabor P.E."/>
            <person name="Verduzco D."/>
            <person name="Waldron L."/>
            <person name="Wang Q."/>
            <person name="Williams G.A."/>
            <person name="Zhang J."/>
            <person name="Zhou J."/>
            <person name="Allen C.C."/>
            <person name="Amin A.G."/>
            <person name="Anyalebechi V."/>
            <person name="Bailey M."/>
            <person name="Barbaria J.A."/>
            <person name="Bimage K.E."/>
            <person name="Bryant N.P."/>
            <person name="Burch P.E."/>
            <person name="Burkett C.E."/>
            <person name="Burrell K.L."/>
            <person name="Calderon E."/>
            <person name="Cardenas V."/>
            <person name="Carter K."/>
            <person name="Casias K."/>
            <person name="Cavazos I."/>
            <person name="Cavazos S.R."/>
            <person name="Ceasar H."/>
            <person name="Chacko J."/>
            <person name="Chan S.N."/>
            <person name="Chavez D."/>
            <person name="Christopoulos C."/>
            <person name="Chu J."/>
            <person name="Cockrell R."/>
            <person name="Cox C.D."/>
            <person name="Dang M."/>
            <person name="Dathorne S.R."/>
            <person name="David R."/>
            <person name="Davis C.M."/>
            <person name="Davy-Carroll L."/>
            <person name="Deshazo D.R."/>
            <person name="Donlin J.E."/>
            <person name="D'Souza L."/>
            <person name="Eaves K.A."/>
            <person name="Egan A."/>
            <person name="Emery-Cohen A.J."/>
            <person name="Escotto M."/>
            <person name="Flagg N."/>
            <person name="Forbes L.D."/>
            <person name="Gabisi A.M."/>
            <person name="Garza M."/>
            <person name="Hamilton C."/>
            <person name="Henderson N."/>
            <person name="Hernandez O."/>
            <person name="Hines S."/>
            <person name="Hogues M.E."/>
            <person name="Huang M."/>
            <person name="Idlebird D.G."/>
            <person name="Johnson R."/>
            <person name="Jolivet A."/>
            <person name="Jones S."/>
            <person name="Kagan R."/>
            <person name="King L.M."/>
            <person name="Leal B."/>
            <person name="Lebow H."/>
            <person name="Lee S."/>
            <person name="LeVan J.M."/>
            <person name="Lewis L.C."/>
            <person name="London P."/>
            <person name="Lorensuhewa L.M."/>
            <person name="Loulseged H."/>
            <person name="Lovett D.A."/>
            <person name="Lucier A."/>
            <person name="Lucier R.L."/>
            <person name="Ma J."/>
            <person name="Madu R.C."/>
            <person name="Mapua P."/>
            <person name="Martindale A.D."/>
            <person name="Martinez E."/>
            <person name="Massey E."/>
            <person name="Mawhiney S."/>
            <person name="Meador M.G."/>
            <person name="Mendez S."/>
            <person name="Mercado C."/>
            <person name="Mercado I.C."/>
            <person name="Merritt C.E."/>
            <person name="Miner Z.L."/>
            <person name="Minja E."/>
            <person name="Mitchell T."/>
            <person name="Mohabbat F."/>
            <person name="Mohabbat K."/>
            <person name="Montgomery B."/>
            <person name="Moore N."/>
            <person name="Morris S."/>
            <person name="Munidasa M."/>
            <person name="Ngo R.N."/>
            <person name="Nguyen N.B."/>
            <person name="Nickerson E."/>
            <person name="Nwaokelemeh O.O."/>
            <person name="Nwokenkwo S."/>
            <person name="Obregon M."/>
            <person name="Oguh M."/>
            <person name="Oragunye N."/>
            <person name="Oviedo R.J."/>
            <person name="Parish B.J."/>
            <person name="Parker D.N."/>
            <person name="Parrish J."/>
            <person name="Parks K.L."/>
            <person name="Paul H.A."/>
            <person name="Payton B.A."/>
            <person name="Perez A."/>
            <person name="Perrin W."/>
            <person name="Pickens A."/>
            <person name="Primus E.L."/>
            <person name="Pu L.-L."/>
            <person name="Puazo M."/>
            <person name="Quiles M.M."/>
            <person name="Quiroz J.B."/>
            <person name="Rabata D."/>
            <person name="Reeves K."/>
            <person name="Ruiz S.J."/>
            <person name="Shao H."/>
            <person name="Sisson I."/>
            <person name="Sonaike T."/>
            <person name="Sorelle R.P."/>
            <person name="Sutton A.E."/>
            <person name="Svatek A.F."/>
            <person name="Svetz L.A."/>
            <person name="Tamerisa K.S."/>
            <person name="Taylor T.R."/>
            <person name="Teague B."/>
            <person name="Thomas N."/>
            <person name="Thorn R.D."/>
            <person name="Trejos Z.Y."/>
            <person name="Trevino B.K."/>
            <person name="Ukegbu O.N."/>
            <person name="Urban J.B."/>
            <person name="Vasquez L.I."/>
            <person name="Vera V.A."/>
            <person name="Villasana D.M."/>
            <person name="Wang L."/>
            <person name="Ward-Moore S."/>
            <person name="Warren J.T."/>
            <person name="Wei X."/>
            <person name="White F."/>
            <person name="Williamson A.L."/>
            <person name="Wleczyk R."/>
            <person name="Wooden H.S."/>
            <person name="Wooden S.H."/>
            <person name="Yen J."/>
            <person name="Yoon L."/>
            <person name="Yoon V."/>
            <person name="Zorrilla S.E."/>
            <person name="Nelson D."/>
            <person name="Kucherlapati R."/>
            <person name="Weinstock G."/>
            <person name="Gibbs R.A."/>
        </authorList>
    </citation>
    <scope>NUCLEOTIDE SEQUENCE [LARGE SCALE GENOMIC DNA]</scope>
</reference>
<reference key="6">
    <citation type="submission" date="2005-07" db="EMBL/GenBank/DDBJ databases">
        <authorList>
            <person name="Mural R.J."/>
            <person name="Istrail S."/>
            <person name="Sutton G.G."/>
            <person name="Florea L."/>
            <person name="Halpern A.L."/>
            <person name="Mobarry C.M."/>
            <person name="Lippert R."/>
            <person name="Walenz B."/>
            <person name="Shatkay H."/>
            <person name="Dew I."/>
            <person name="Miller J.R."/>
            <person name="Flanigan M.J."/>
            <person name="Edwards N.J."/>
            <person name="Bolanos R."/>
            <person name="Fasulo D."/>
            <person name="Halldorsson B.V."/>
            <person name="Hannenhalli S."/>
            <person name="Turner R."/>
            <person name="Yooseph S."/>
            <person name="Lu F."/>
            <person name="Nusskern D.R."/>
            <person name="Shue B.C."/>
            <person name="Zheng X.H."/>
            <person name="Zhong F."/>
            <person name="Delcher A.L."/>
            <person name="Huson D.H."/>
            <person name="Kravitz S.A."/>
            <person name="Mouchard L."/>
            <person name="Reinert K."/>
            <person name="Remington K.A."/>
            <person name="Clark A.G."/>
            <person name="Waterman M.S."/>
            <person name="Eichler E.E."/>
            <person name="Adams M.D."/>
            <person name="Hunkapiller M.W."/>
            <person name="Myers E.W."/>
            <person name="Venter J.C."/>
        </authorList>
    </citation>
    <scope>NUCLEOTIDE SEQUENCE [LARGE SCALE GENOMIC DNA]</scope>
</reference>
<reference key="7">
    <citation type="journal article" date="2004" name="Genome Res.">
        <title>The status, quality, and expansion of the NIH full-length cDNA project: the Mammalian Gene Collection (MGC).</title>
        <authorList>
            <consortium name="The MGC Project Team"/>
        </authorList>
    </citation>
    <scope>NUCLEOTIDE SEQUENCE [LARGE SCALE MRNA]</scope>
    <source>
        <tissue>Blood vessel</tissue>
        <tissue>Cervix</tissue>
    </source>
</reference>
<reference key="8">
    <citation type="journal article" date="2004" name="J. Biol. Chem.">
        <title>Proteomics of endoplasmic reticulum-Golgi intermediate compartment (ERGIC) membranes from brefeldin A-treated HepG2 cells identifies ERGIC-32, a new cycling protein that interacts with human Erv46.</title>
        <authorList>
            <person name="Breuza L."/>
            <person name="Halbeisen R."/>
            <person name="Jenoe P."/>
            <person name="Otte S."/>
            <person name="Barlowe C."/>
            <person name="Hong W."/>
            <person name="Hauri H.-P."/>
        </authorList>
    </citation>
    <scope>SUBCELLULAR LOCATION</scope>
</reference>
<reference key="9">
    <citation type="journal article" date="2008" name="Biochim. Biophys. Acta">
        <title>The possible interaction of CDA14 and protein elongation factor 1alpha.</title>
        <authorList>
            <person name="Yang Y.F."/>
            <person name="Chou M.Y."/>
            <person name="Fan C.Y."/>
            <person name="Chen S.F."/>
            <person name="Lyu P.C."/>
            <person name="Liu C.C."/>
            <person name="Tseng T.L."/>
        </authorList>
    </citation>
    <scope>SUBCELLULAR LOCATION</scope>
    <scope>INTERACTION WITH EEF1A1</scope>
</reference>
<reference key="10">
    <citation type="journal article" date="2019" name="J. Biol. Chem.">
        <title>The E3 ubiquitin ligase MARCH2 regulates ERGIC3-dependent trafficking of secretory proteins.</title>
        <authorList>
            <person name="Yoo W."/>
            <person name="Cho E.B."/>
            <person name="Kim S."/>
            <person name="Yoon J.B."/>
        </authorList>
    </citation>
    <scope>IDENTIFICATION IN A COMPLEX WITH ERGIC1 AND ERGIC3</scope>
    <scope>INTERACTION WITH ERGIC3</scope>
</reference>
<dbReference type="EMBL" id="AF302767">
    <property type="protein sequence ID" value="AAK77355.1"/>
    <property type="molecule type" value="mRNA"/>
</dbReference>
<dbReference type="EMBL" id="AK074520">
    <property type="protein sequence ID" value="BAC11037.1"/>
    <property type="molecule type" value="mRNA"/>
</dbReference>
<dbReference type="EMBL" id="AF216751">
    <property type="protein sequence ID" value="AAF61208.1"/>
    <property type="status" value="ALT_FRAME"/>
    <property type="molecule type" value="mRNA"/>
</dbReference>
<dbReference type="EMBL" id="AK222799">
    <property type="protein sequence ID" value="BAD96519.1"/>
    <property type="molecule type" value="mRNA"/>
</dbReference>
<dbReference type="EMBL" id="AC009318">
    <property type="status" value="NOT_ANNOTATED_CDS"/>
    <property type="molecule type" value="Genomic_DNA"/>
</dbReference>
<dbReference type="EMBL" id="CH471094">
    <property type="protein sequence ID" value="EAW96592.1"/>
    <property type="molecule type" value="Genomic_DNA"/>
</dbReference>
<dbReference type="EMBL" id="BC000887">
    <property type="protein sequence ID" value="AAH00887.2"/>
    <property type="molecule type" value="mRNA"/>
</dbReference>
<dbReference type="EMBL" id="BC107794">
    <property type="protein sequence ID" value="AAI07795.1"/>
    <property type="molecule type" value="mRNA"/>
</dbReference>
<dbReference type="CCDS" id="CCDS41765.1"/>
<dbReference type="RefSeq" id="NP_057654.2">
    <property type="nucleotide sequence ID" value="NM_016570.3"/>
</dbReference>
<dbReference type="RefSeq" id="XP_024304777.1">
    <property type="nucleotide sequence ID" value="XM_024449009.2"/>
</dbReference>
<dbReference type="RefSeq" id="XP_054228171.1">
    <property type="nucleotide sequence ID" value="XM_054372196.1"/>
</dbReference>
<dbReference type="SMR" id="Q96RQ1"/>
<dbReference type="BioGRID" id="119441">
    <property type="interactions" value="267"/>
</dbReference>
<dbReference type="ComplexPortal" id="CPX-7221">
    <property type="entry name" value="ERGIC2-ERGIC3 retrograde receptor complex"/>
</dbReference>
<dbReference type="FunCoup" id="Q96RQ1">
    <property type="interactions" value="1727"/>
</dbReference>
<dbReference type="IntAct" id="Q96RQ1">
    <property type="interactions" value="63"/>
</dbReference>
<dbReference type="MINT" id="Q96RQ1"/>
<dbReference type="STRING" id="9606.ENSP00000353270"/>
<dbReference type="GlyCosmos" id="Q96RQ1">
    <property type="glycosylation" value="1 site, 1 glycan"/>
</dbReference>
<dbReference type="GlyGen" id="Q96RQ1">
    <property type="glycosylation" value="4 sites, 2 N-linked glycans (1 site), 3 O-linked glycans (3 sites)"/>
</dbReference>
<dbReference type="iPTMnet" id="Q96RQ1"/>
<dbReference type="MetOSite" id="Q96RQ1"/>
<dbReference type="PhosphoSitePlus" id="Q96RQ1"/>
<dbReference type="SwissPalm" id="Q96RQ1"/>
<dbReference type="BioMuta" id="ERGIC2"/>
<dbReference type="DMDM" id="108935982"/>
<dbReference type="jPOST" id="Q96RQ1"/>
<dbReference type="MassIVE" id="Q96RQ1"/>
<dbReference type="PaxDb" id="9606-ENSP00000353270"/>
<dbReference type="PeptideAtlas" id="Q96RQ1"/>
<dbReference type="ProteomicsDB" id="78002"/>
<dbReference type="Pumba" id="Q96RQ1"/>
<dbReference type="Antibodypedia" id="7205">
    <property type="antibodies" value="202 antibodies from 28 providers"/>
</dbReference>
<dbReference type="DNASU" id="51290"/>
<dbReference type="Ensembl" id="ENST00000360150.9">
    <property type="protein sequence ID" value="ENSP00000353270.4"/>
    <property type="gene ID" value="ENSG00000087502.19"/>
</dbReference>
<dbReference type="GeneID" id="51290"/>
<dbReference type="KEGG" id="hsa:51290"/>
<dbReference type="MANE-Select" id="ENST00000360150.9">
    <property type="protein sequence ID" value="ENSP00000353270.4"/>
    <property type="RefSeq nucleotide sequence ID" value="NM_016570.3"/>
    <property type="RefSeq protein sequence ID" value="NP_057654.2"/>
</dbReference>
<dbReference type="UCSC" id="uc001riv.4">
    <property type="organism name" value="human"/>
</dbReference>
<dbReference type="AGR" id="HGNC:30208"/>
<dbReference type="CTD" id="51290"/>
<dbReference type="DisGeNET" id="51290"/>
<dbReference type="GeneCards" id="ERGIC2"/>
<dbReference type="HGNC" id="HGNC:30208">
    <property type="gene designation" value="ERGIC2"/>
</dbReference>
<dbReference type="HPA" id="ENSG00000087502">
    <property type="expression patterns" value="Low tissue specificity"/>
</dbReference>
<dbReference type="MIM" id="612236">
    <property type="type" value="gene"/>
</dbReference>
<dbReference type="neXtProt" id="NX_Q96RQ1"/>
<dbReference type="OpenTargets" id="ENSG00000087502"/>
<dbReference type="PharmGKB" id="PA143485457"/>
<dbReference type="VEuPathDB" id="HostDB:ENSG00000087502"/>
<dbReference type="eggNOG" id="KOG2667">
    <property type="taxonomic scope" value="Eukaryota"/>
</dbReference>
<dbReference type="GeneTree" id="ENSGT00530000063113"/>
<dbReference type="HOGENOM" id="CLU_034705_4_1_1"/>
<dbReference type="InParanoid" id="Q96RQ1"/>
<dbReference type="OMA" id="MTNHYLR"/>
<dbReference type="OrthoDB" id="5541786at2759"/>
<dbReference type="PAN-GO" id="Q96RQ1">
    <property type="GO annotations" value="5 GO annotations based on evolutionary models"/>
</dbReference>
<dbReference type="PhylomeDB" id="Q96RQ1"/>
<dbReference type="TreeFam" id="TF317192"/>
<dbReference type="PathwayCommons" id="Q96RQ1"/>
<dbReference type="SignaLink" id="Q96RQ1"/>
<dbReference type="BioGRID-ORCS" id="51290">
    <property type="hits" value="53 hits in 1164 CRISPR screens"/>
</dbReference>
<dbReference type="ChiTaRS" id="ERGIC2">
    <property type="organism name" value="human"/>
</dbReference>
<dbReference type="GeneWiki" id="ERGIC2"/>
<dbReference type="GenomeRNAi" id="51290"/>
<dbReference type="Pharos" id="Q96RQ1">
    <property type="development level" value="Tbio"/>
</dbReference>
<dbReference type="PRO" id="PR:Q96RQ1"/>
<dbReference type="Proteomes" id="UP000005640">
    <property type="component" value="Chromosome 12"/>
</dbReference>
<dbReference type="RNAct" id="Q96RQ1">
    <property type="molecule type" value="protein"/>
</dbReference>
<dbReference type="Bgee" id="ENSG00000087502">
    <property type="expression patterns" value="Expressed in buccal mucosa cell and 202 other cell types or tissues"/>
</dbReference>
<dbReference type="ExpressionAtlas" id="Q96RQ1">
    <property type="expression patterns" value="baseline and differential"/>
</dbReference>
<dbReference type="GO" id="GO:0030134">
    <property type="term" value="C:COPII-coated ER to Golgi transport vesicle"/>
    <property type="evidence" value="ECO:0000318"/>
    <property type="project" value="GO_Central"/>
</dbReference>
<dbReference type="GO" id="GO:0005737">
    <property type="term" value="C:cytoplasm"/>
    <property type="evidence" value="ECO:0000314"/>
    <property type="project" value="UniProtKB"/>
</dbReference>
<dbReference type="GO" id="GO:0005783">
    <property type="term" value="C:endoplasmic reticulum"/>
    <property type="evidence" value="ECO:0000318"/>
    <property type="project" value="GO_Central"/>
</dbReference>
<dbReference type="GO" id="GO:0005789">
    <property type="term" value="C:endoplasmic reticulum membrane"/>
    <property type="evidence" value="ECO:0007669"/>
    <property type="project" value="UniProtKB-SubCell"/>
</dbReference>
<dbReference type="GO" id="GO:0033116">
    <property type="term" value="C:endoplasmic reticulum-Golgi intermediate compartment membrane"/>
    <property type="evidence" value="ECO:0007669"/>
    <property type="project" value="UniProtKB-SubCell"/>
</dbReference>
<dbReference type="GO" id="GO:0005794">
    <property type="term" value="C:Golgi apparatus"/>
    <property type="evidence" value="ECO:0000314"/>
    <property type="project" value="HPA"/>
</dbReference>
<dbReference type="GO" id="GO:0043231">
    <property type="term" value="C:intracellular membrane-bounded organelle"/>
    <property type="evidence" value="ECO:0000314"/>
    <property type="project" value="HPA"/>
</dbReference>
<dbReference type="GO" id="GO:0016020">
    <property type="term" value="C:membrane"/>
    <property type="evidence" value="ECO:0007005"/>
    <property type="project" value="UniProtKB"/>
</dbReference>
<dbReference type="GO" id="GO:0005730">
    <property type="term" value="C:nucleolus"/>
    <property type="evidence" value="ECO:0000314"/>
    <property type="project" value="HPA"/>
</dbReference>
<dbReference type="GO" id="GO:0005634">
    <property type="term" value="C:nucleus"/>
    <property type="evidence" value="ECO:0000314"/>
    <property type="project" value="UniProtKB"/>
</dbReference>
<dbReference type="GO" id="GO:0061852">
    <property type="term" value="C:retrograde transporter complex, Golgi to ER"/>
    <property type="evidence" value="ECO:0000353"/>
    <property type="project" value="ComplexPortal"/>
</dbReference>
<dbReference type="GO" id="GO:1990351">
    <property type="term" value="C:transporter complex"/>
    <property type="evidence" value="ECO:0000353"/>
    <property type="project" value="ComplexPortal"/>
</dbReference>
<dbReference type="GO" id="GO:0006888">
    <property type="term" value="P:endoplasmic reticulum to Golgi vesicle-mediated transport"/>
    <property type="evidence" value="ECO:0000314"/>
    <property type="project" value="ComplexPortal"/>
</dbReference>
<dbReference type="GO" id="GO:0006890">
    <property type="term" value="P:retrograde vesicle-mediated transport, Golgi to endoplasmic reticulum"/>
    <property type="evidence" value="ECO:0000315"/>
    <property type="project" value="WormBase"/>
</dbReference>
<dbReference type="InterPro" id="IPR045888">
    <property type="entry name" value="Erv"/>
</dbReference>
<dbReference type="InterPro" id="IPR012936">
    <property type="entry name" value="Erv_C"/>
</dbReference>
<dbReference type="InterPro" id="IPR039542">
    <property type="entry name" value="Erv_N"/>
</dbReference>
<dbReference type="PANTHER" id="PTHR10984">
    <property type="entry name" value="ENDOPLASMIC RETICULUM-GOLGI INTERMEDIATE COMPARTMENT PROTEIN"/>
    <property type="match status" value="1"/>
</dbReference>
<dbReference type="PANTHER" id="PTHR10984:SF30">
    <property type="entry name" value="ENDOPLASMIC RETICULUM-GOLGI INTERMEDIATE COMPARTMENT PROTEIN 2"/>
    <property type="match status" value="1"/>
</dbReference>
<dbReference type="Pfam" id="PF07970">
    <property type="entry name" value="COPIIcoated_ERV"/>
    <property type="match status" value="1"/>
</dbReference>
<dbReference type="Pfam" id="PF13850">
    <property type="entry name" value="ERGIC_N"/>
    <property type="match status" value="1"/>
</dbReference>
<feature type="chain" id="PRO_0000239382" description="Endoplasmic reticulum-Golgi intermediate compartment protein 2">
    <location>
        <begin position="1"/>
        <end position="377"/>
    </location>
</feature>
<feature type="topological domain" description="Cytoplasmic" evidence="2">
    <location>
        <begin position="1"/>
        <end position="33"/>
    </location>
</feature>
<feature type="transmembrane region" description="Helical" evidence="2">
    <location>
        <begin position="34"/>
        <end position="54"/>
    </location>
</feature>
<feature type="topological domain" description="Lumenal" evidence="2">
    <location>
        <begin position="55"/>
        <end position="319"/>
    </location>
</feature>
<feature type="transmembrane region" description="Helical" evidence="2">
    <location>
        <begin position="320"/>
        <end position="340"/>
    </location>
</feature>
<feature type="topological domain" description="Cytoplasmic" evidence="2">
    <location>
        <begin position="341"/>
        <end position="377"/>
    </location>
</feature>
<feature type="sequence conflict" description="In Ref. 1; AAK77355." evidence="6" ref="1">
    <original>E</original>
    <variation>K</variation>
    <location>
        <position position="51"/>
    </location>
</feature>
<feature type="sequence conflict" description="In Ref. 1; AAK77355." evidence="6" ref="1">
    <original>D</original>
    <variation>Y</variation>
    <location>
        <position position="266"/>
    </location>
</feature>
<feature type="sequence conflict" description="In Ref. 4; BAD96519." evidence="6" ref="4">
    <original>N</original>
    <variation>S</variation>
    <location>
        <position position="374"/>
    </location>
</feature>
<protein>
    <recommendedName>
        <fullName>Endoplasmic reticulum-Golgi intermediate compartment protein 2</fullName>
    </recommendedName>
</protein>
<sequence>MRRLNRKKTLSLVKELDAFPKVPESYVETSASGGTVSLIAFTTMALLTIMEFSVYQDTWMKYEYEVDKDFSSKLRINIDITVAMKCQYVGADVLDLAETMVASADGLVYEPTVFDLSPQQKEWQRMLQLIQSRLQEEHSLQDVIFKSAFKSTSTALPPREDDSSQSPNACRIHGHLYVNKVAGNFHITVGKAIPHPRGHAHLAALVNHESYNFSHRIDHLSFGELVPAIINPLDGTEKIAIDHNQMFQYFITVVPTKLHTYKISADTHQFSVTERERIINHAAGSHGVSGIFMKYDLSSLMVTVTEEHMPFWQFFVRLCGIVGGIFSTTGMLHGIGKFIVEIICCRFRLGSYKPVNSVPFEDGHTDNHLPLLENNTH</sequence>
<organism>
    <name type="scientific">Homo sapiens</name>
    <name type="common">Human</name>
    <dbReference type="NCBI Taxonomy" id="9606"/>
    <lineage>
        <taxon>Eukaryota</taxon>
        <taxon>Metazoa</taxon>
        <taxon>Chordata</taxon>
        <taxon>Craniata</taxon>
        <taxon>Vertebrata</taxon>
        <taxon>Euteleostomi</taxon>
        <taxon>Mammalia</taxon>
        <taxon>Eutheria</taxon>
        <taxon>Euarchontoglires</taxon>
        <taxon>Primates</taxon>
        <taxon>Haplorrhini</taxon>
        <taxon>Catarrhini</taxon>
        <taxon>Hominidae</taxon>
        <taxon>Homo</taxon>
    </lineage>
</organism>
<proteinExistence type="evidence at protein level"/>
<accession>Q96RQ1</accession>
<accession>A6NHH6</accession>
<accession>Q53GY2</accession>
<accession>Q8N2Q9</accession>
<accession>Q9BVV9</accession>
<accession>Q9NZA3</accession>